<dbReference type="EC" id="6.3.4.4" evidence="1"/>
<dbReference type="EMBL" id="CP001340">
    <property type="protein sequence ID" value="ACL96666.1"/>
    <property type="molecule type" value="Genomic_DNA"/>
</dbReference>
<dbReference type="RefSeq" id="WP_010920939.1">
    <property type="nucleotide sequence ID" value="NC_011916.1"/>
</dbReference>
<dbReference type="RefSeq" id="YP_002518574.1">
    <property type="nucleotide sequence ID" value="NC_011916.1"/>
</dbReference>
<dbReference type="SMR" id="B8H3C9"/>
<dbReference type="GeneID" id="7330795"/>
<dbReference type="KEGG" id="ccs:CCNA_03201"/>
<dbReference type="PATRIC" id="fig|565050.3.peg.3127"/>
<dbReference type="HOGENOM" id="CLU_029848_0_0_5"/>
<dbReference type="OrthoDB" id="9807553at2"/>
<dbReference type="PhylomeDB" id="B8H3C9"/>
<dbReference type="UniPathway" id="UPA00075">
    <property type="reaction ID" value="UER00335"/>
</dbReference>
<dbReference type="Proteomes" id="UP000001364">
    <property type="component" value="Chromosome"/>
</dbReference>
<dbReference type="GO" id="GO:0005737">
    <property type="term" value="C:cytoplasm"/>
    <property type="evidence" value="ECO:0007669"/>
    <property type="project" value="UniProtKB-SubCell"/>
</dbReference>
<dbReference type="GO" id="GO:0004019">
    <property type="term" value="F:adenylosuccinate synthase activity"/>
    <property type="evidence" value="ECO:0007669"/>
    <property type="project" value="UniProtKB-UniRule"/>
</dbReference>
<dbReference type="GO" id="GO:0005525">
    <property type="term" value="F:GTP binding"/>
    <property type="evidence" value="ECO:0007669"/>
    <property type="project" value="UniProtKB-UniRule"/>
</dbReference>
<dbReference type="GO" id="GO:0000287">
    <property type="term" value="F:magnesium ion binding"/>
    <property type="evidence" value="ECO:0007669"/>
    <property type="project" value="UniProtKB-UniRule"/>
</dbReference>
<dbReference type="GO" id="GO:0044208">
    <property type="term" value="P:'de novo' AMP biosynthetic process"/>
    <property type="evidence" value="ECO:0007669"/>
    <property type="project" value="UniProtKB-UniRule"/>
</dbReference>
<dbReference type="GO" id="GO:0046040">
    <property type="term" value="P:IMP metabolic process"/>
    <property type="evidence" value="ECO:0007669"/>
    <property type="project" value="TreeGrafter"/>
</dbReference>
<dbReference type="CDD" id="cd03108">
    <property type="entry name" value="AdSS"/>
    <property type="match status" value="1"/>
</dbReference>
<dbReference type="FunFam" id="1.10.300.10:FF:000001">
    <property type="entry name" value="Adenylosuccinate synthetase"/>
    <property type="match status" value="1"/>
</dbReference>
<dbReference type="FunFam" id="3.90.170.10:FF:000001">
    <property type="entry name" value="Adenylosuccinate synthetase"/>
    <property type="match status" value="1"/>
</dbReference>
<dbReference type="Gene3D" id="3.40.440.10">
    <property type="entry name" value="Adenylosuccinate Synthetase, subunit A, domain 1"/>
    <property type="match status" value="1"/>
</dbReference>
<dbReference type="Gene3D" id="1.10.300.10">
    <property type="entry name" value="Adenylosuccinate Synthetase, subunit A, domain 2"/>
    <property type="match status" value="1"/>
</dbReference>
<dbReference type="Gene3D" id="3.90.170.10">
    <property type="entry name" value="Adenylosuccinate Synthetase, subunit A, domain 3"/>
    <property type="match status" value="1"/>
</dbReference>
<dbReference type="HAMAP" id="MF_00011">
    <property type="entry name" value="Adenylosucc_synth"/>
    <property type="match status" value="1"/>
</dbReference>
<dbReference type="InterPro" id="IPR018220">
    <property type="entry name" value="Adenylosuccin_syn_GTP-bd"/>
</dbReference>
<dbReference type="InterPro" id="IPR033128">
    <property type="entry name" value="Adenylosuccin_syn_Lys_AS"/>
</dbReference>
<dbReference type="InterPro" id="IPR042109">
    <property type="entry name" value="Adenylosuccinate_synth_dom1"/>
</dbReference>
<dbReference type="InterPro" id="IPR042110">
    <property type="entry name" value="Adenylosuccinate_synth_dom2"/>
</dbReference>
<dbReference type="InterPro" id="IPR042111">
    <property type="entry name" value="Adenylosuccinate_synth_dom3"/>
</dbReference>
<dbReference type="InterPro" id="IPR001114">
    <property type="entry name" value="Adenylosuccinate_synthetase"/>
</dbReference>
<dbReference type="InterPro" id="IPR027417">
    <property type="entry name" value="P-loop_NTPase"/>
</dbReference>
<dbReference type="NCBIfam" id="NF002223">
    <property type="entry name" value="PRK01117.1"/>
    <property type="match status" value="1"/>
</dbReference>
<dbReference type="NCBIfam" id="TIGR00184">
    <property type="entry name" value="purA"/>
    <property type="match status" value="1"/>
</dbReference>
<dbReference type="PANTHER" id="PTHR11846">
    <property type="entry name" value="ADENYLOSUCCINATE SYNTHETASE"/>
    <property type="match status" value="1"/>
</dbReference>
<dbReference type="PANTHER" id="PTHR11846:SF0">
    <property type="entry name" value="ADENYLOSUCCINATE SYNTHETASE"/>
    <property type="match status" value="1"/>
</dbReference>
<dbReference type="Pfam" id="PF00709">
    <property type="entry name" value="Adenylsucc_synt"/>
    <property type="match status" value="1"/>
</dbReference>
<dbReference type="SMART" id="SM00788">
    <property type="entry name" value="Adenylsucc_synt"/>
    <property type="match status" value="1"/>
</dbReference>
<dbReference type="SUPFAM" id="SSF52540">
    <property type="entry name" value="P-loop containing nucleoside triphosphate hydrolases"/>
    <property type="match status" value="1"/>
</dbReference>
<dbReference type="PROSITE" id="PS01266">
    <property type="entry name" value="ADENYLOSUCCIN_SYN_1"/>
    <property type="match status" value="1"/>
</dbReference>
<dbReference type="PROSITE" id="PS00513">
    <property type="entry name" value="ADENYLOSUCCIN_SYN_2"/>
    <property type="match status" value="1"/>
</dbReference>
<keyword id="KW-0963">Cytoplasm</keyword>
<keyword id="KW-0342">GTP-binding</keyword>
<keyword id="KW-0436">Ligase</keyword>
<keyword id="KW-0460">Magnesium</keyword>
<keyword id="KW-0479">Metal-binding</keyword>
<keyword id="KW-0547">Nucleotide-binding</keyword>
<keyword id="KW-0658">Purine biosynthesis</keyword>
<keyword id="KW-1185">Reference proteome</keyword>
<sequence>MANVTVVGAQWGDEGKGKIVDWLSNRADVVVRFQGGHNAGHTLVVDGKVYKLALLPSGVVQGKLSVIGNGVVVDPWHLLSEIDKIADQGVAITPDLLILADNACLILPLHRDLDQAREAASTQKIGTTGRGIGPAYEDKVGRRAIRVADLADPEALKPKIERLLAHHGALRRGLGLPEANAQELFDALMELAPRILSYAQPAWRVLDQAYKAGRRILFEGAQGSLLDVDHGTYPFVTSSNTAAGQASAGSGMGPSATGFVLGIVKAYTTRVGEGPFPAELFDEVGKHLSTVGREVGVNTGRARRCGWFDSVLVRQSVAINGIHGVALTKLDVLDGLKTLKICVGYKIGDKVVDYLPAGLRDQAAATPVYEEIEGWTESTAGARSFKDLNANAIKYVRRVEELIGAPVALLSTSPERDDTILMRDPFQG</sequence>
<accession>B8H3C9</accession>
<feature type="chain" id="PRO_1000116461" description="Adenylosuccinate synthetase">
    <location>
        <begin position="1"/>
        <end position="428"/>
    </location>
</feature>
<feature type="active site" description="Proton acceptor" evidence="1">
    <location>
        <position position="13"/>
    </location>
</feature>
<feature type="active site" description="Proton donor" evidence="1">
    <location>
        <position position="41"/>
    </location>
</feature>
<feature type="binding site" evidence="1">
    <location>
        <begin position="12"/>
        <end position="18"/>
    </location>
    <ligand>
        <name>GTP</name>
        <dbReference type="ChEBI" id="CHEBI:37565"/>
    </ligand>
</feature>
<feature type="binding site" description="in other chain" evidence="1">
    <location>
        <begin position="13"/>
        <end position="16"/>
    </location>
    <ligand>
        <name>IMP</name>
        <dbReference type="ChEBI" id="CHEBI:58053"/>
        <note>ligand shared between dimeric partners</note>
    </ligand>
</feature>
<feature type="binding site" evidence="1">
    <location>
        <position position="13"/>
    </location>
    <ligand>
        <name>Mg(2+)</name>
        <dbReference type="ChEBI" id="CHEBI:18420"/>
    </ligand>
</feature>
<feature type="binding site" description="in other chain" evidence="1">
    <location>
        <begin position="38"/>
        <end position="41"/>
    </location>
    <ligand>
        <name>IMP</name>
        <dbReference type="ChEBI" id="CHEBI:58053"/>
        <note>ligand shared between dimeric partners</note>
    </ligand>
</feature>
<feature type="binding site" evidence="1">
    <location>
        <begin position="40"/>
        <end position="42"/>
    </location>
    <ligand>
        <name>GTP</name>
        <dbReference type="ChEBI" id="CHEBI:37565"/>
    </ligand>
</feature>
<feature type="binding site" evidence="1">
    <location>
        <position position="40"/>
    </location>
    <ligand>
        <name>Mg(2+)</name>
        <dbReference type="ChEBI" id="CHEBI:18420"/>
    </ligand>
</feature>
<feature type="binding site" description="in other chain" evidence="1">
    <location>
        <position position="128"/>
    </location>
    <ligand>
        <name>IMP</name>
        <dbReference type="ChEBI" id="CHEBI:58053"/>
        <note>ligand shared between dimeric partners</note>
    </ligand>
</feature>
<feature type="binding site" evidence="1">
    <location>
        <position position="142"/>
    </location>
    <ligand>
        <name>IMP</name>
        <dbReference type="ChEBI" id="CHEBI:58053"/>
        <note>ligand shared between dimeric partners</note>
    </ligand>
</feature>
<feature type="binding site" description="in other chain" evidence="1">
    <location>
        <position position="222"/>
    </location>
    <ligand>
        <name>IMP</name>
        <dbReference type="ChEBI" id="CHEBI:58053"/>
        <note>ligand shared between dimeric partners</note>
    </ligand>
</feature>
<feature type="binding site" description="in other chain" evidence="1">
    <location>
        <position position="237"/>
    </location>
    <ligand>
        <name>IMP</name>
        <dbReference type="ChEBI" id="CHEBI:58053"/>
        <note>ligand shared between dimeric partners</note>
    </ligand>
</feature>
<feature type="binding site" evidence="1">
    <location>
        <begin position="297"/>
        <end position="303"/>
    </location>
    <ligand>
        <name>substrate</name>
    </ligand>
</feature>
<feature type="binding site" description="in other chain" evidence="1">
    <location>
        <position position="301"/>
    </location>
    <ligand>
        <name>IMP</name>
        <dbReference type="ChEBI" id="CHEBI:58053"/>
        <note>ligand shared between dimeric partners</note>
    </ligand>
</feature>
<feature type="binding site" evidence="1">
    <location>
        <position position="303"/>
    </location>
    <ligand>
        <name>GTP</name>
        <dbReference type="ChEBI" id="CHEBI:37565"/>
    </ligand>
</feature>
<feature type="binding site" evidence="1">
    <location>
        <begin position="329"/>
        <end position="331"/>
    </location>
    <ligand>
        <name>GTP</name>
        <dbReference type="ChEBI" id="CHEBI:37565"/>
    </ligand>
</feature>
<feature type="binding site" evidence="1">
    <location>
        <begin position="411"/>
        <end position="413"/>
    </location>
    <ligand>
        <name>GTP</name>
        <dbReference type="ChEBI" id="CHEBI:37565"/>
    </ligand>
</feature>
<organism>
    <name type="scientific">Caulobacter vibrioides (strain NA1000 / CB15N)</name>
    <name type="common">Caulobacter crescentus</name>
    <dbReference type="NCBI Taxonomy" id="565050"/>
    <lineage>
        <taxon>Bacteria</taxon>
        <taxon>Pseudomonadati</taxon>
        <taxon>Pseudomonadota</taxon>
        <taxon>Alphaproteobacteria</taxon>
        <taxon>Caulobacterales</taxon>
        <taxon>Caulobacteraceae</taxon>
        <taxon>Caulobacter</taxon>
    </lineage>
</organism>
<comment type="function">
    <text evidence="1">Plays an important role in the de novo pathway of purine nucleotide biosynthesis. Catalyzes the first committed step in the biosynthesis of AMP from IMP.</text>
</comment>
<comment type="catalytic activity">
    <reaction evidence="1">
        <text>IMP + L-aspartate + GTP = N(6)-(1,2-dicarboxyethyl)-AMP + GDP + phosphate + 2 H(+)</text>
        <dbReference type="Rhea" id="RHEA:15753"/>
        <dbReference type="ChEBI" id="CHEBI:15378"/>
        <dbReference type="ChEBI" id="CHEBI:29991"/>
        <dbReference type="ChEBI" id="CHEBI:37565"/>
        <dbReference type="ChEBI" id="CHEBI:43474"/>
        <dbReference type="ChEBI" id="CHEBI:57567"/>
        <dbReference type="ChEBI" id="CHEBI:58053"/>
        <dbReference type="ChEBI" id="CHEBI:58189"/>
        <dbReference type="EC" id="6.3.4.4"/>
    </reaction>
</comment>
<comment type="cofactor">
    <cofactor evidence="1">
        <name>Mg(2+)</name>
        <dbReference type="ChEBI" id="CHEBI:18420"/>
    </cofactor>
    <text evidence="1">Binds 1 Mg(2+) ion per subunit.</text>
</comment>
<comment type="pathway">
    <text evidence="1">Purine metabolism; AMP biosynthesis via de novo pathway; AMP from IMP: step 1/2.</text>
</comment>
<comment type="subunit">
    <text evidence="1">Homodimer.</text>
</comment>
<comment type="subcellular location">
    <subcellularLocation>
        <location evidence="1">Cytoplasm</location>
    </subcellularLocation>
</comment>
<comment type="similarity">
    <text evidence="1">Belongs to the adenylosuccinate synthetase family.</text>
</comment>
<protein>
    <recommendedName>
        <fullName evidence="1">Adenylosuccinate synthetase</fullName>
        <shortName evidence="1">AMPSase</shortName>
        <shortName evidence="1">AdSS</shortName>
        <ecNumber evidence="1">6.3.4.4</ecNumber>
    </recommendedName>
    <alternativeName>
        <fullName evidence="1">IMP--aspartate ligase</fullName>
    </alternativeName>
</protein>
<gene>
    <name evidence="1" type="primary">purA</name>
    <name type="ordered locus">CCNA_03201</name>
</gene>
<reference key="1">
    <citation type="journal article" date="2010" name="J. Bacteriol.">
        <title>The genetic basis of laboratory adaptation in Caulobacter crescentus.</title>
        <authorList>
            <person name="Marks M.E."/>
            <person name="Castro-Rojas C.M."/>
            <person name="Teiling C."/>
            <person name="Du L."/>
            <person name="Kapatral V."/>
            <person name="Walunas T.L."/>
            <person name="Crosson S."/>
        </authorList>
    </citation>
    <scope>NUCLEOTIDE SEQUENCE [LARGE SCALE GENOMIC DNA]</scope>
    <source>
        <strain>NA1000 / CB15N</strain>
    </source>
</reference>
<evidence type="ECO:0000255" key="1">
    <source>
        <dbReference type="HAMAP-Rule" id="MF_00011"/>
    </source>
</evidence>
<name>PURA_CAUVN</name>
<proteinExistence type="inferred from homology"/>